<dbReference type="EMBL" id="BR000105">
    <property type="protein sequence ID" value="FAA00136.1"/>
    <property type="molecule type" value="mRNA"/>
</dbReference>
<dbReference type="RefSeq" id="NP_001041454.1">
    <property type="nucleotide sequence ID" value="NM_001047989.1"/>
</dbReference>
<dbReference type="SMR" id="Q1RLC9"/>
<dbReference type="FunCoup" id="Q1RLC9">
    <property type="interactions" value="75"/>
</dbReference>
<dbReference type="STRING" id="7719.ENSCINP00000035879"/>
<dbReference type="Ensembl" id="ENSCINT00000035913.1">
    <property type="protein sequence ID" value="ENSCINP00000035879.1"/>
    <property type="gene ID" value="ENSCING00000021229.1"/>
</dbReference>
<dbReference type="GeneID" id="723802"/>
<dbReference type="KEGG" id="cin:723802"/>
<dbReference type="CTD" id="723802"/>
<dbReference type="eggNOG" id="KOG3454">
    <property type="taxonomic scope" value="Eukaryota"/>
</dbReference>
<dbReference type="GeneTree" id="ENSGT00730000110997"/>
<dbReference type="HOGENOM" id="CLU_079697_3_1_1"/>
<dbReference type="InParanoid" id="Q1RLC9"/>
<dbReference type="OMA" id="MMPTGPR"/>
<dbReference type="OrthoDB" id="76567at2759"/>
<dbReference type="TreeFam" id="TF313578"/>
<dbReference type="Proteomes" id="UP000008144">
    <property type="component" value="Unassembled WGS sequence"/>
</dbReference>
<dbReference type="GO" id="GO:0000243">
    <property type="term" value="C:commitment complex"/>
    <property type="evidence" value="ECO:0007669"/>
    <property type="project" value="UniProtKB-UniRule"/>
</dbReference>
<dbReference type="GO" id="GO:0005685">
    <property type="term" value="C:U1 snRNP"/>
    <property type="evidence" value="ECO:0000318"/>
    <property type="project" value="GO_Central"/>
</dbReference>
<dbReference type="GO" id="GO:0071004">
    <property type="term" value="C:U2-type prespliceosome"/>
    <property type="evidence" value="ECO:0007669"/>
    <property type="project" value="UniProtKB-UniRule"/>
</dbReference>
<dbReference type="GO" id="GO:0003729">
    <property type="term" value="F:mRNA binding"/>
    <property type="evidence" value="ECO:0007669"/>
    <property type="project" value="UniProtKB-UniRule"/>
</dbReference>
<dbReference type="GO" id="GO:0030627">
    <property type="term" value="F:pre-mRNA 5'-splice site binding"/>
    <property type="evidence" value="ECO:0000318"/>
    <property type="project" value="GO_Central"/>
</dbReference>
<dbReference type="GO" id="GO:0030619">
    <property type="term" value="F:U1 snRNA binding"/>
    <property type="evidence" value="ECO:0007669"/>
    <property type="project" value="UniProtKB-UniRule"/>
</dbReference>
<dbReference type="GO" id="GO:0008270">
    <property type="term" value="F:zinc ion binding"/>
    <property type="evidence" value="ECO:0007669"/>
    <property type="project" value="UniProtKB-UniRule"/>
</dbReference>
<dbReference type="GO" id="GO:0000395">
    <property type="term" value="P:mRNA 5'-splice site recognition"/>
    <property type="evidence" value="ECO:0000318"/>
    <property type="project" value="GO_Central"/>
</dbReference>
<dbReference type="GO" id="GO:0000387">
    <property type="term" value="P:spliceosomal snRNP assembly"/>
    <property type="evidence" value="ECO:0007669"/>
    <property type="project" value="UniProtKB-UniRule"/>
</dbReference>
<dbReference type="FunFam" id="3.30.160.60:FF:000059">
    <property type="entry name" value="U1 small nuclear ribonucleoprotein C"/>
    <property type="match status" value="1"/>
</dbReference>
<dbReference type="Gene3D" id="3.30.160.60">
    <property type="entry name" value="Classic Zinc Finger"/>
    <property type="match status" value="1"/>
</dbReference>
<dbReference type="HAMAP" id="MF_03153">
    <property type="entry name" value="U1_C"/>
    <property type="match status" value="1"/>
</dbReference>
<dbReference type="InterPro" id="IPR000690">
    <property type="entry name" value="Matrin/U1-C_Znf_C2H2"/>
</dbReference>
<dbReference type="InterPro" id="IPR003604">
    <property type="entry name" value="Matrin/U1-like-C_Znf_C2H2"/>
</dbReference>
<dbReference type="InterPro" id="IPR013085">
    <property type="entry name" value="U1-CZ_Znf_C2H2"/>
</dbReference>
<dbReference type="InterPro" id="IPR017340">
    <property type="entry name" value="U1_snRNP-C"/>
</dbReference>
<dbReference type="InterPro" id="IPR036236">
    <property type="entry name" value="Znf_C2H2_sf"/>
</dbReference>
<dbReference type="PANTHER" id="PTHR31148">
    <property type="entry name" value="U1 SMALL NUCLEAR RIBONUCLEOPROTEIN C"/>
    <property type="match status" value="1"/>
</dbReference>
<dbReference type="PANTHER" id="PTHR31148:SF1">
    <property type="entry name" value="U1 SMALL NUCLEAR RIBONUCLEOPROTEIN C"/>
    <property type="match status" value="1"/>
</dbReference>
<dbReference type="Pfam" id="PF06220">
    <property type="entry name" value="zf-U1"/>
    <property type="match status" value="1"/>
</dbReference>
<dbReference type="PIRSF" id="PIRSF037969">
    <property type="entry name" value="U1_snRNP-C"/>
    <property type="match status" value="1"/>
</dbReference>
<dbReference type="SMART" id="SM00451">
    <property type="entry name" value="ZnF_U1"/>
    <property type="match status" value="1"/>
</dbReference>
<dbReference type="SUPFAM" id="SSF57667">
    <property type="entry name" value="beta-beta-alpha zinc fingers"/>
    <property type="match status" value="1"/>
</dbReference>
<dbReference type="PROSITE" id="PS50171">
    <property type="entry name" value="ZF_MATRIN"/>
    <property type="match status" value="1"/>
</dbReference>
<feature type="chain" id="PRO_0000414257" description="U1 small nuclear ribonucleoprotein C">
    <location>
        <begin position="1"/>
        <end position="122"/>
    </location>
</feature>
<feature type="zinc finger region" description="Matrin-type" evidence="1">
    <location>
        <begin position="4"/>
        <end position="36"/>
    </location>
</feature>
<keyword id="KW-0479">Metal-binding</keyword>
<keyword id="KW-0539">Nucleus</keyword>
<keyword id="KW-1185">Reference proteome</keyword>
<keyword id="KW-0687">Ribonucleoprotein</keyword>
<keyword id="KW-0694">RNA-binding</keyword>
<keyword id="KW-0862">Zinc</keyword>
<keyword id="KW-0863">Zinc-finger</keyword>
<name>RU1C_CIOIN</name>
<proteinExistence type="evidence at transcript level"/>
<evidence type="ECO:0000255" key="1">
    <source>
        <dbReference type="HAMAP-Rule" id="MF_03153"/>
    </source>
</evidence>
<protein>
    <recommendedName>
        <fullName evidence="1">U1 small nuclear ribonucleoprotein C</fullName>
        <shortName evidence="1">U1 snRNP C</shortName>
        <shortName evidence="1">U1-C</shortName>
        <shortName evidence="1">U1C</shortName>
    </recommendedName>
</protein>
<sequence length="122" mass="13714">MPKYFCDYCDTYLTHDSPSVRKTHCSGRKHKDNVKMYYQTWMEEQAQELIDKTTQAFQKGKMGNFGGLPPNGMMMGPRGPMPMMPMMPVRPMGMGGMLPMRPVPPAMMGGGQVMMMGPRPGM</sequence>
<reference key="1">
    <citation type="journal article" date="2002" name="Science">
        <title>The draft genome of Ciona intestinalis: insights into chordate and vertebrate origins.</title>
        <authorList>
            <person name="Dehal P."/>
            <person name="Satou Y."/>
            <person name="Campbell R.K."/>
            <person name="Chapman J."/>
            <person name="Degnan B."/>
            <person name="De Tomaso A."/>
            <person name="Davidson B."/>
            <person name="Di Gregorio A."/>
            <person name="Gelpke M."/>
            <person name="Goodstein D.M."/>
            <person name="Harafuji N."/>
            <person name="Hastings K.E."/>
            <person name="Ho I."/>
            <person name="Hotta K."/>
            <person name="Huang W."/>
            <person name="Kawashima T."/>
            <person name="Lemaire P."/>
            <person name="Martinez D."/>
            <person name="Meinertzhagen I.A."/>
            <person name="Necula S."/>
            <person name="Nonaka M."/>
            <person name="Putnam N."/>
            <person name="Rash S."/>
            <person name="Saiga H."/>
            <person name="Satake M."/>
            <person name="Terry A."/>
            <person name="Yamada L."/>
            <person name="Wang H.G."/>
            <person name="Awazu S."/>
            <person name="Azumi K."/>
            <person name="Boore J."/>
            <person name="Branno M."/>
            <person name="Chin-Bow S."/>
            <person name="DeSantis R."/>
            <person name="Doyle S."/>
            <person name="Francino P."/>
            <person name="Keys D.N."/>
            <person name="Haga S."/>
            <person name="Hayashi H."/>
            <person name="Hino K."/>
            <person name="Imai K.S."/>
            <person name="Inaba K."/>
            <person name="Kano S."/>
            <person name="Kobayashi K."/>
            <person name="Kobayashi M."/>
            <person name="Lee B.I."/>
            <person name="Makabe K.W."/>
            <person name="Manohar C."/>
            <person name="Matassi G."/>
            <person name="Medina M."/>
            <person name="Mochizuki Y."/>
            <person name="Mount S."/>
            <person name="Morishita T."/>
            <person name="Miura S."/>
            <person name="Nakayama A."/>
            <person name="Nishizaka S."/>
            <person name="Nomoto H."/>
            <person name="Ohta F."/>
            <person name="Oishi K."/>
            <person name="Rigoutsos I."/>
            <person name="Sano M."/>
            <person name="Sasaki A."/>
            <person name="Sasakura Y."/>
            <person name="Shoguchi E."/>
            <person name="Shin-i T."/>
            <person name="Spagnuolo A."/>
            <person name="Stainier D."/>
            <person name="Suzuki M.M."/>
            <person name="Tassy O."/>
            <person name="Takatori N."/>
            <person name="Tokuoka M."/>
            <person name="Yagi K."/>
            <person name="Yoshizaki F."/>
            <person name="Wada S."/>
            <person name="Zhang C."/>
            <person name="Hyatt P.D."/>
            <person name="Larimer F."/>
            <person name="Detter C."/>
            <person name="Doggett N."/>
            <person name="Glavina T."/>
            <person name="Hawkins T."/>
            <person name="Richardson P."/>
            <person name="Lucas S."/>
            <person name="Kohara Y."/>
            <person name="Levine M."/>
            <person name="Satoh N."/>
            <person name="Rokhsar D.S."/>
        </authorList>
    </citation>
    <scope>NUCLEOTIDE SEQUENCE [LARGE SCALE GENOMIC DNA]</scope>
</reference>
<reference key="2">
    <citation type="journal article" date="2006" name="Dev. Biol.">
        <title>Systematic analysis of embryonic expression profiles of zinc finger genes in Ciona intestinalis.</title>
        <authorList>
            <person name="Miwata K."/>
            <person name="Chiba T."/>
            <person name="Horii R."/>
            <person name="Yamada L."/>
            <person name="Kubo A."/>
            <person name="Miyamura D."/>
            <person name="Satoh N."/>
            <person name="Satou Y."/>
        </authorList>
    </citation>
    <scope>NUCLEOTIDE SEQUENCE [LARGE SCALE MRNA]</scope>
</reference>
<organism>
    <name type="scientific">Ciona intestinalis</name>
    <name type="common">Transparent sea squirt</name>
    <name type="synonym">Ascidia intestinalis</name>
    <dbReference type="NCBI Taxonomy" id="7719"/>
    <lineage>
        <taxon>Eukaryota</taxon>
        <taxon>Metazoa</taxon>
        <taxon>Chordata</taxon>
        <taxon>Tunicata</taxon>
        <taxon>Ascidiacea</taxon>
        <taxon>Phlebobranchia</taxon>
        <taxon>Cionidae</taxon>
        <taxon>Ciona</taxon>
    </lineage>
</organism>
<comment type="function">
    <text evidence="1">Component of the spliceosomal U1 snRNP, which is essential for recognition of the pre-mRNA 5' splice-site and the subsequent assembly of the spliceosome. U1-C is directly involved in initial 5' splice-site recognition for both constitutive and regulated alternative splicing. The interaction with the 5' splice-site seems to precede base-pairing between the pre-mRNA and the U1 snRNA. Stimulates commitment or early (E) complex formation by stabilizing the base pairing of the 5' end of the U1 snRNA and the 5' splice-site region.</text>
</comment>
<comment type="subunit">
    <text evidence="1">U1 snRNP is composed of the 7 core Sm proteins B/B', D1, D2, D3, E, F and G that assemble in a heptameric protein ring on the Sm site of the small nuclear RNA to form the core snRNP, and at least 3 U1 snRNP-specific proteins U1-70K, U1-A and U1-C. U1-C interacts with U1 snRNA and the 5' splice-site region of the pre-mRNA.</text>
</comment>
<comment type="subcellular location">
    <subcellularLocation>
        <location evidence="1">Nucleus</location>
    </subcellularLocation>
</comment>
<comment type="similarity">
    <text evidence="1">Belongs to the U1 small nuclear ribonucleoprotein C family.</text>
</comment>
<accession>Q1RLC9</accession>